<feature type="chain" id="PRO_0000314344" description="Carboxy-S-adenosyl-L-methionine synthase">
    <location>
        <begin position="1"/>
        <end position="247"/>
    </location>
</feature>
<feature type="binding site" evidence="1">
    <location>
        <position position="39"/>
    </location>
    <ligand>
        <name>S-adenosyl-L-methionine</name>
        <dbReference type="ChEBI" id="CHEBI:59789"/>
    </ligand>
</feature>
<feature type="binding site" evidence="1">
    <location>
        <begin position="64"/>
        <end position="66"/>
    </location>
    <ligand>
        <name>S-adenosyl-L-methionine</name>
        <dbReference type="ChEBI" id="CHEBI:59789"/>
    </ligand>
</feature>
<feature type="binding site" evidence="1">
    <location>
        <begin position="89"/>
        <end position="90"/>
    </location>
    <ligand>
        <name>S-adenosyl-L-methionine</name>
        <dbReference type="ChEBI" id="CHEBI:59789"/>
    </ligand>
</feature>
<feature type="binding site" evidence="1">
    <location>
        <begin position="117"/>
        <end position="118"/>
    </location>
    <ligand>
        <name>S-adenosyl-L-methionine</name>
        <dbReference type="ChEBI" id="CHEBI:59789"/>
    </ligand>
</feature>
<feature type="binding site" evidence="1">
    <location>
        <position position="132"/>
    </location>
    <ligand>
        <name>S-adenosyl-L-methionine</name>
        <dbReference type="ChEBI" id="CHEBI:59789"/>
    </ligand>
</feature>
<feature type="binding site" evidence="1">
    <location>
        <position position="199"/>
    </location>
    <ligand>
        <name>S-adenosyl-L-methionine</name>
        <dbReference type="ChEBI" id="CHEBI:59789"/>
    </ligand>
</feature>
<organism>
    <name type="scientific">Klebsiella pneumoniae subsp. pneumoniae (strain ATCC 700721 / MGH 78578)</name>
    <dbReference type="NCBI Taxonomy" id="272620"/>
    <lineage>
        <taxon>Bacteria</taxon>
        <taxon>Pseudomonadati</taxon>
        <taxon>Pseudomonadota</taxon>
        <taxon>Gammaproteobacteria</taxon>
        <taxon>Enterobacterales</taxon>
        <taxon>Enterobacteriaceae</taxon>
        <taxon>Klebsiella/Raoultella group</taxon>
        <taxon>Klebsiella</taxon>
        <taxon>Klebsiella pneumoniae complex</taxon>
    </lineage>
</organism>
<sequence length="247" mass="27690">MSHRDTLFSAPIASLGDWTFDERVAEVFPDMIQRSVPGYSNIISMIGMLAERFVQPNTQVYDLGCSLGAATLSVRRNISHPDCRIIAIDNSPAMVERCRRHIDAYKAPTPVEVIEGDIRDVTIENASLVILNFTIQFLEPGDRQAILNKVYQGLNPGGALVLSEKFSFEDAHVGELLFNMHHDFKRANGYSELEISQKRSMLENVMLTDSVETHKARLRQAGFEHAELWFQCFNFGSLVAVKAGEQA</sequence>
<proteinExistence type="inferred from homology"/>
<keyword id="KW-0949">S-adenosyl-L-methionine</keyword>
<keyword id="KW-0808">Transferase</keyword>
<protein>
    <recommendedName>
        <fullName evidence="1">Carboxy-S-adenosyl-L-methionine synthase</fullName>
        <shortName evidence="1">Cx-SAM synthase</shortName>
        <ecNumber evidence="1">2.1.3.-</ecNumber>
    </recommendedName>
</protein>
<accession>A6TB39</accession>
<reference key="1">
    <citation type="submission" date="2006-09" db="EMBL/GenBank/DDBJ databases">
        <authorList>
            <consortium name="The Klebsiella pneumonia Genome Sequencing Project"/>
            <person name="McClelland M."/>
            <person name="Sanderson E.K."/>
            <person name="Spieth J."/>
            <person name="Clifton W.S."/>
            <person name="Latreille P."/>
            <person name="Sabo A."/>
            <person name="Pepin K."/>
            <person name="Bhonagiri V."/>
            <person name="Porwollik S."/>
            <person name="Ali J."/>
            <person name="Wilson R.K."/>
        </authorList>
    </citation>
    <scope>NUCLEOTIDE SEQUENCE [LARGE SCALE GENOMIC DNA]</scope>
    <source>
        <strain>ATCC 700721 / MGH 78578</strain>
    </source>
</reference>
<evidence type="ECO:0000255" key="1">
    <source>
        <dbReference type="HAMAP-Rule" id="MF_01589"/>
    </source>
</evidence>
<comment type="function">
    <text evidence="1">Catalyzes the conversion of S-adenosyl-L-methionine (SAM) to carboxy-S-adenosyl-L-methionine (Cx-SAM).</text>
</comment>
<comment type="catalytic activity">
    <reaction evidence="1">
        <text>prephenate + S-adenosyl-L-methionine = carboxy-S-adenosyl-L-methionine + 3-phenylpyruvate + H2O</text>
        <dbReference type="Rhea" id="RHEA:51692"/>
        <dbReference type="ChEBI" id="CHEBI:15377"/>
        <dbReference type="ChEBI" id="CHEBI:18005"/>
        <dbReference type="ChEBI" id="CHEBI:29934"/>
        <dbReference type="ChEBI" id="CHEBI:59789"/>
        <dbReference type="ChEBI" id="CHEBI:134278"/>
    </reaction>
</comment>
<comment type="subunit">
    <text evidence="1">Homodimer.</text>
</comment>
<comment type="similarity">
    <text evidence="1">Belongs to the class I-like SAM-binding methyltransferase superfamily. Cx-SAM synthase family.</text>
</comment>
<dbReference type="EC" id="2.1.3.-" evidence="1"/>
<dbReference type="EMBL" id="CP000647">
    <property type="protein sequence ID" value="ABR77810.1"/>
    <property type="molecule type" value="Genomic_DNA"/>
</dbReference>
<dbReference type="RefSeq" id="WP_004175417.1">
    <property type="nucleotide sequence ID" value="NC_009648.1"/>
</dbReference>
<dbReference type="SMR" id="A6TB39"/>
<dbReference type="STRING" id="272620.KPN_02384"/>
<dbReference type="PaxDb" id="272620-KPN_02384"/>
<dbReference type="EnsemblBacteria" id="ABR77810">
    <property type="protein sequence ID" value="ABR77810"/>
    <property type="gene ID" value="KPN_02384"/>
</dbReference>
<dbReference type="KEGG" id="kpn:KPN_02384"/>
<dbReference type="HOGENOM" id="CLU_078475_0_0_6"/>
<dbReference type="Proteomes" id="UP000000265">
    <property type="component" value="Chromosome"/>
</dbReference>
<dbReference type="GO" id="GO:0016743">
    <property type="term" value="F:carboxyl- or carbamoyltransferase activity"/>
    <property type="evidence" value="ECO:0007669"/>
    <property type="project" value="UniProtKB-UniRule"/>
</dbReference>
<dbReference type="GO" id="GO:1904047">
    <property type="term" value="F:S-adenosyl-L-methionine binding"/>
    <property type="evidence" value="ECO:0007669"/>
    <property type="project" value="UniProtKB-UniRule"/>
</dbReference>
<dbReference type="GO" id="GO:0002098">
    <property type="term" value="P:tRNA wobble uridine modification"/>
    <property type="evidence" value="ECO:0007669"/>
    <property type="project" value="InterPro"/>
</dbReference>
<dbReference type="CDD" id="cd02440">
    <property type="entry name" value="AdoMet_MTases"/>
    <property type="match status" value="1"/>
</dbReference>
<dbReference type="FunFam" id="3.40.50.150:FF:000030">
    <property type="entry name" value="Carboxy-S-adenosyl-L-methionine synthase"/>
    <property type="match status" value="1"/>
</dbReference>
<dbReference type="Gene3D" id="3.40.50.150">
    <property type="entry name" value="Vaccinia Virus protein VP39"/>
    <property type="match status" value="1"/>
</dbReference>
<dbReference type="HAMAP" id="MF_01589">
    <property type="entry name" value="Cx_SAM_synthase"/>
    <property type="match status" value="1"/>
</dbReference>
<dbReference type="InterPro" id="IPR005271">
    <property type="entry name" value="CmoA"/>
</dbReference>
<dbReference type="InterPro" id="IPR041698">
    <property type="entry name" value="Methyltransf_25"/>
</dbReference>
<dbReference type="InterPro" id="IPR029063">
    <property type="entry name" value="SAM-dependent_MTases_sf"/>
</dbReference>
<dbReference type="NCBIfam" id="TIGR00740">
    <property type="entry name" value="carboxy-S-adenosyl-L-methionine synthase CmoA"/>
    <property type="match status" value="1"/>
</dbReference>
<dbReference type="NCBIfam" id="NF011995">
    <property type="entry name" value="PRK15451.1"/>
    <property type="match status" value="1"/>
</dbReference>
<dbReference type="PANTHER" id="PTHR43861:SF2">
    <property type="entry name" value="CARBOXY-S-ADENOSYL-L-METHIONINE SYNTHASE"/>
    <property type="match status" value="1"/>
</dbReference>
<dbReference type="PANTHER" id="PTHR43861">
    <property type="entry name" value="TRANS-ACONITATE 2-METHYLTRANSFERASE-RELATED"/>
    <property type="match status" value="1"/>
</dbReference>
<dbReference type="Pfam" id="PF13649">
    <property type="entry name" value="Methyltransf_25"/>
    <property type="match status" value="1"/>
</dbReference>
<dbReference type="PIRSF" id="PIRSF006325">
    <property type="entry name" value="MeTrfase_bac"/>
    <property type="match status" value="1"/>
</dbReference>
<dbReference type="SUPFAM" id="SSF53335">
    <property type="entry name" value="S-adenosyl-L-methionine-dependent methyltransferases"/>
    <property type="match status" value="1"/>
</dbReference>
<name>CMOA_KLEP7</name>
<gene>
    <name evidence="1" type="primary">cmoA</name>
    <name type="ordered locus">KPN78578_23490</name>
    <name type="ORF">KPN_02384</name>
</gene>